<organism>
    <name type="scientific">Murexia naso</name>
    <name type="common">Long-nosed marsupial mouse</name>
    <name type="synonym">Antechinus naso</name>
    <dbReference type="NCBI Taxonomy" id="418659"/>
    <lineage>
        <taxon>Eukaryota</taxon>
        <taxon>Metazoa</taxon>
        <taxon>Chordata</taxon>
        <taxon>Craniata</taxon>
        <taxon>Vertebrata</taxon>
        <taxon>Euteleostomi</taxon>
        <taxon>Mammalia</taxon>
        <taxon>Metatheria</taxon>
        <taxon>Dasyuromorphia</taxon>
        <taxon>Dasyuridae</taxon>
        <taxon>Murexia</taxon>
    </lineage>
</organism>
<keyword id="KW-0158">Chromosome</keyword>
<keyword id="KW-0217">Developmental protein</keyword>
<keyword id="KW-0221">Differentiation</keyword>
<keyword id="KW-0226">DNA condensation</keyword>
<keyword id="KW-0238">DNA-binding</keyword>
<keyword id="KW-0544">Nucleosome core</keyword>
<keyword id="KW-0539">Nucleus</keyword>
<keyword id="KW-0744">Spermatogenesis</keyword>
<dbReference type="EMBL" id="AF038301">
    <property type="protein sequence ID" value="AAC15628.1"/>
    <property type="molecule type" value="Genomic_DNA"/>
</dbReference>
<dbReference type="GO" id="GO:0000786">
    <property type="term" value="C:nucleosome"/>
    <property type="evidence" value="ECO:0007669"/>
    <property type="project" value="UniProtKB-KW"/>
</dbReference>
<dbReference type="GO" id="GO:0005634">
    <property type="term" value="C:nucleus"/>
    <property type="evidence" value="ECO:0007669"/>
    <property type="project" value="UniProtKB-SubCell"/>
</dbReference>
<dbReference type="GO" id="GO:0003677">
    <property type="term" value="F:DNA binding"/>
    <property type="evidence" value="ECO:0007669"/>
    <property type="project" value="UniProtKB-KW"/>
</dbReference>
<dbReference type="GO" id="GO:0030261">
    <property type="term" value="P:chromosome condensation"/>
    <property type="evidence" value="ECO:0007669"/>
    <property type="project" value="UniProtKB-KW"/>
</dbReference>
<dbReference type="GO" id="GO:0035092">
    <property type="term" value="P:sperm DNA condensation"/>
    <property type="evidence" value="ECO:0007669"/>
    <property type="project" value="InterPro"/>
</dbReference>
<dbReference type="InterPro" id="IPR000221">
    <property type="entry name" value="Protamine_P1"/>
</dbReference>
<dbReference type="PROSITE" id="PS00048">
    <property type="entry name" value="PROTAMINE_P1"/>
    <property type="match status" value="1"/>
</dbReference>
<reference key="1">
    <citation type="journal article" date="1998" name="J. Mammal.">
        <title>Phylogeny of the dasyurid marsupial genus Antechinus based on cytochrome-b, 12S-rRNA, and protamine-P1 genes.</title>
        <authorList>
            <person name="Armstrong L.A."/>
            <person name="Krajewski C."/>
            <person name="Westerman M."/>
        </authorList>
    </citation>
    <scope>NUCLEOTIDE SEQUENCE [GENOMIC DNA]</scope>
</reference>
<gene>
    <name type="primary">PRM1</name>
</gene>
<name>HSP1_MURNA</name>
<protein>
    <recommendedName>
        <fullName>Sperm protamine P1</fullName>
    </recommendedName>
</protein>
<comment type="function">
    <text evidence="1">Protamines substitute for histones in the chromatin of sperm during the haploid phase of spermatogenesis. They compact sperm DNA into a highly condensed, stable and inactive complex (By similarity).</text>
</comment>
<comment type="subcellular location">
    <subcellularLocation>
        <location evidence="1">Nucleus</location>
    </subcellularLocation>
    <subcellularLocation>
        <location evidence="1">Chromosome</location>
    </subcellularLocation>
</comment>
<comment type="tissue specificity">
    <text>Testis.</text>
</comment>
<comment type="similarity">
    <text evidence="3">Belongs to the protamine P1 family.</text>
</comment>
<proteinExistence type="evidence at transcript level"/>
<accession>Q71V12</accession>
<evidence type="ECO:0000250" key="1"/>
<evidence type="ECO:0000256" key="2">
    <source>
        <dbReference type="SAM" id="MobiDB-lite"/>
    </source>
</evidence>
<evidence type="ECO:0000305" key="3"/>
<feature type="chain" id="PRO_0000191447" description="Sperm protamine P1">
    <location>
        <begin position="1"/>
        <end position="63"/>
    </location>
</feature>
<feature type="region of interest" description="Disordered" evidence="2">
    <location>
        <begin position="1"/>
        <end position="63"/>
    </location>
</feature>
<sequence>MARYRRHSRSRSRSRYRRRRRRRSRHHNRRRTYRRSRRHSRRRRGRRRGYSRRRYSRRGRRRY</sequence>